<protein>
    <recommendedName>
        <fullName>Zinc finger FYVE domain-containing protein 21</fullName>
    </recommendedName>
</protein>
<sequence length="234" mass="26009">MSSGVAARCDAKKLVRSPSGLRMVPEHRAFGSPFGLEEPQWVPDKECPRCMQCDAKFDFITRKHHCRRCGKCFCDRCCSQKVPLRRMCFVDPVRQCADCALVSHREAEFYDKQLKVLVSGATFLVTFGDSEKPETMVCRLSNNQRCLILDGDSHHEIEIAHVCTVQILTEGFTPGAGSTRATGMFLQYTVPGAEAAAQLRLMAGEDASGSKRQAAAWLAAMHKATKLLYESRDQ</sequence>
<gene>
    <name type="primary">Zfyve21</name>
</gene>
<organism>
    <name type="scientific">Rattus norvegicus</name>
    <name type="common">Rat</name>
    <dbReference type="NCBI Taxonomy" id="10116"/>
    <lineage>
        <taxon>Eukaryota</taxon>
        <taxon>Metazoa</taxon>
        <taxon>Chordata</taxon>
        <taxon>Craniata</taxon>
        <taxon>Vertebrata</taxon>
        <taxon>Euteleostomi</taxon>
        <taxon>Mammalia</taxon>
        <taxon>Eutheria</taxon>
        <taxon>Euarchontoglires</taxon>
        <taxon>Glires</taxon>
        <taxon>Rodentia</taxon>
        <taxon>Myomorpha</taxon>
        <taxon>Muroidea</taxon>
        <taxon>Muridae</taxon>
        <taxon>Murinae</taxon>
        <taxon>Rattus</taxon>
    </lineage>
</organism>
<feature type="chain" id="PRO_0000401195" description="Zinc finger FYVE domain-containing protein 21">
    <location>
        <begin position="1"/>
        <end position="234"/>
    </location>
</feature>
<feature type="zinc finger region" description="FYVE-type" evidence="2">
    <location>
        <begin position="44"/>
        <end position="104"/>
    </location>
</feature>
<feature type="region of interest" description="PH-like" evidence="1">
    <location>
        <begin position="107"/>
        <end position="234"/>
    </location>
</feature>
<feature type="binding site" evidence="2">
    <location>
        <position position="50"/>
    </location>
    <ligand>
        <name>Zn(2+)</name>
        <dbReference type="ChEBI" id="CHEBI:29105"/>
        <label>1</label>
    </ligand>
</feature>
<feature type="binding site" evidence="2">
    <location>
        <position position="53"/>
    </location>
    <ligand>
        <name>Zn(2+)</name>
        <dbReference type="ChEBI" id="CHEBI:29105"/>
        <label>1</label>
    </ligand>
</feature>
<feature type="binding site" evidence="2">
    <location>
        <position position="66"/>
    </location>
    <ligand>
        <name>Zn(2+)</name>
        <dbReference type="ChEBI" id="CHEBI:29105"/>
        <label>2</label>
    </ligand>
</feature>
<feature type="binding site" evidence="2">
    <location>
        <position position="69"/>
    </location>
    <ligand>
        <name>Zn(2+)</name>
        <dbReference type="ChEBI" id="CHEBI:29105"/>
        <label>2</label>
    </ligand>
</feature>
<feature type="binding site" evidence="2">
    <location>
        <position position="74"/>
    </location>
    <ligand>
        <name>Zn(2+)</name>
        <dbReference type="ChEBI" id="CHEBI:29105"/>
        <label>1</label>
    </ligand>
</feature>
<feature type="binding site" evidence="2">
    <location>
        <position position="77"/>
    </location>
    <ligand>
        <name>Zn(2+)</name>
        <dbReference type="ChEBI" id="CHEBI:29105"/>
        <label>1</label>
    </ligand>
</feature>
<feature type="binding site" evidence="2">
    <location>
        <position position="96"/>
    </location>
    <ligand>
        <name>Zn(2+)</name>
        <dbReference type="ChEBI" id="CHEBI:29105"/>
        <label>2</label>
    </ligand>
</feature>
<feature type="binding site" evidence="2">
    <location>
        <position position="99"/>
    </location>
    <ligand>
        <name>Zn(2+)</name>
        <dbReference type="ChEBI" id="CHEBI:29105"/>
        <label>2</label>
    </ligand>
</feature>
<name>ZFY21_RAT</name>
<reference key="1">
    <citation type="submission" date="2005-09" db="EMBL/GenBank/DDBJ databases">
        <authorList>
            <person name="Mural R.J."/>
            <person name="Adams M.D."/>
            <person name="Myers E.W."/>
            <person name="Smith H.O."/>
            <person name="Venter J.C."/>
        </authorList>
    </citation>
    <scope>NUCLEOTIDE SEQUENCE [LARGE SCALE GENOMIC DNA]</scope>
</reference>
<comment type="function">
    <text evidence="1">Plays a role in cell adhesion, and thereby in cell motility which requires repeated formation and disassembly of focal adhesions. Regulates microtubule-induced PTK2/FAK1 dephosphorylation, an event important for focal adhesion disassembly, as well as integrin beta-1/ITGB1 cell surface expression (By similarity).</text>
</comment>
<comment type="subunit">
    <text evidence="1">Interacts with PTK2/FAK1.</text>
</comment>
<comment type="subcellular location">
    <subcellularLocation>
        <location>Cell junction</location>
        <location>Focal adhesion</location>
    </subcellularLocation>
    <subcellularLocation>
        <location evidence="1">Cytoplasmic vesicle</location>
    </subcellularLocation>
    <subcellularLocation>
        <location evidence="1">Endosome</location>
    </subcellularLocation>
</comment>
<comment type="domain">
    <text evidence="1">The FYVE-type zinc finger mediates interaction with PTK2/FAK1, and also interaction with PI(3)P and association with endosomes.</text>
</comment>
<comment type="domain">
    <text evidence="1">The C-terminal region exhibits a structure similar to canonical PH domains, but lacks a positively charged interface to bind phosphatidylinositol phosphate.</text>
</comment>
<proteinExistence type="inferred from homology"/>
<accession>D3ZVP7</accession>
<keyword id="KW-0965">Cell junction</keyword>
<keyword id="KW-0968">Cytoplasmic vesicle</keyword>
<keyword id="KW-0967">Endosome</keyword>
<keyword id="KW-0479">Metal-binding</keyword>
<keyword id="KW-1185">Reference proteome</keyword>
<keyword id="KW-0862">Zinc</keyword>
<keyword id="KW-0863">Zinc-finger</keyword>
<evidence type="ECO:0000250" key="1"/>
<evidence type="ECO:0000255" key="2">
    <source>
        <dbReference type="PROSITE-ProRule" id="PRU00091"/>
    </source>
</evidence>
<dbReference type="EMBL" id="CH474034">
    <property type="protein sequence ID" value="EDL97443.1"/>
    <property type="molecule type" value="Genomic_DNA"/>
</dbReference>
<dbReference type="RefSeq" id="NP_001386667.1">
    <property type="nucleotide sequence ID" value="NM_001399738.1"/>
</dbReference>
<dbReference type="RefSeq" id="XP_006240704.3">
    <property type="nucleotide sequence ID" value="XM_006240642.3"/>
</dbReference>
<dbReference type="SMR" id="D3ZVP7"/>
<dbReference type="FunCoup" id="D3ZVP7">
    <property type="interactions" value="582"/>
</dbReference>
<dbReference type="STRING" id="10116.ENSRNOP00000074963"/>
<dbReference type="PhosphoSitePlus" id="D3ZVP7"/>
<dbReference type="PaxDb" id="10116-ENSRNOP00000059837"/>
<dbReference type="GeneID" id="362789"/>
<dbReference type="UCSC" id="RGD:1311036">
    <property type="organism name" value="rat"/>
</dbReference>
<dbReference type="AGR" id="RGD:1311036"/>
<dbReference type="RGD" id="1311036">
    <property type="gene designation" value="Zfyve21"/>
</dbReference>
<dbReference type="eggNOG" id="ENOG502QRR6">
    <property type="taxonomic scope" value="Eukaryota"/>
</dbReference>
<dbReference type="InParanoid" id="D3ZVP7"/>
<dbReference type="PhylomeDB" id="D3ZVP7"/>
<dbReference type="TreeFam" id="TF329481"/>
<dbReference type="PRO" id="PR:D3ZVP7"/>
<dbReference type="Proteomes" id="UP000002494">
    <property type="component" value="Unplaced"/>
</dbReference>
<dbReference type="Proteomes" id="UP000234681">
    <property type="component" value="Chromosome 6"/>
</dbReference>
<dbReference type="GO" id="GO:0005768">
    <property type="term" value="C:endosome"/>
    <property type="evidence" value="ECO:0007669"/>
    <property type="project" value="UniProtKB-SubCell"/>
</dbReference>
<dbReference type="GO" id="GO:0005925">
    <property type="term" value="C:focal adhesion"/>
    <property type="evidence" value="ECO:0007669"/>
    <property type="project" value="UniProtKB-SubCell"/>
</dbReference>
<dbReference type="GO" id="GO:0008270">
    <property type="term" value="F:zinc ion binding"/>
    <property type="evidence" value="ECO:0007669"/>
    <property type="project" value="UniProtKB-KW"/>
</dbReference>
<dbReference type="CDD" id="cd15727">
    <property type="entry name" value="FYVE_ZF21"/>
    <property type="match status" value="1"/>
</dbReference>
<dbReference type="Gene3D" id="2.30.29.160">
    <property type="entry name" value="Zinc finger FYVE domain-containing protein 21, C-terminal"/>
    <property type="match status" value="1"/>
</dbReference>
<dbReference type="Gene3D" id="3.30.40.10">
    <property type="entry name" value="Zinc/RING finger domain, C3HC4 (zinc finger)"/>
    <property type="match status" value="1"/>
</dbReference>
<dbReference type="InterPro" id="IPR052113">
    <property type="entry name" value="FYVE-type_Zinc_Finger"/>
</dbReference>
<dbReference type="InterPro" id="IPR032031">
    <property type="entry name" value="ZFYVE21_C"/>
</dbReference>
<dbReference type="InterPro" id="IPR038632">
    <property type="entry name" value="ZFYVE21_C_sf"/>
</dbReference>
<dbReference type="InterPro" id="IPR000306">
    <property type="entry name" value="Znf_FYVE"/>
</dbReference>
<dbReference type="InterPro" id="IPR017455">
    <property type="entry name" value="Znf_FYVE-rel"/>
</dbReference>
<dbReference type="InterPro" id="IPR011011">
    <property type="entry name" value="Znf_FYVE_PHD"/>
</dbReference>
<dbReference type="InterPro" id="IPR013083">
    <property type="entry name" value="Znf_RING/FYVE/PHD"/>
</dbReference>
<dbReference type="PANTHER" id="PTHR39490">
    <property type="entry name" value="ARRESTIN DOMAIN-CONTAINING PROTEIN D"/>
    <property type="match status" value="1"/>
</dbReference>
<dbReference type="PANTHER" id="PTHR39490:SF8">
    <property type="entry name" value="ZINC FINGER FYVE DOMAIN-CONTAINING PROTEIN 21"/>
    <property type="match status" value="1"/>
</dbReference>
<dbReference type="Pfam" id="PF01363">
    <property type="entry name" value="FYVE"/>
    <property type="match status" value="1"/>
</dbReference>
<dbReference type="Pfam" id="PF16696">
    <property type="entry name" value="ZFYVE21_C"/>
    <property type="match status" value="1"/>
</dbReference>
<dbReference type="SMART" id="SM00064">
    <property type="entry name" value="FYVE"/>
    <property type="match status" value="1"/>
</dbReference>
<dbReference type="SUPFAM" id="SSF57903">
    <property type="entry name" value="FYVE/PHD zinc finger"/>
    <property type="match status" value="1"/>
</dbReference>
<dbReference type="PROSITE" id="PS50178">
    <property type="entry name" value="ZF_FYVE"/>
    <property type="match status" value="1"/>
</dbReference>